<keyword id="KW-0680">Restriction system</keyword>
<sequence>MMIESVAISVKESMPPQVSVEINGMLNDGCTAFHEAKQSIDGNTIKIEVTTIRPKDAMCNQQISPFSTIIQIEGELKPGEYTILVNDVAEALKL</sequence>
<protein>
    <recommendedName>
        <fullName>Uncharacterized 10.2 kDa protein in HgiCIIM 5'region</fullName>
    </recommendedName>
    <alternativeName>
        <fullName>ORF11</fullName>
    </alternativeName>
    <alternativeName>
        <fullName>ORFC</fullName>
    </alternativeName>
</protein>
<dbReference type="EMBL" id="X55139">
    <property type="protein sequence ID" value="CAA38934.1"/>
    <property type="molecule type" value="Genomic_DNA"/>
</dbReference>
<dbReference type="PIR" id="JC1164">
    <property type="entry name" value="JC1164"/>
</dbReference>
<dbReference type="GO" id="GO:0009307">
    <property type="term" value="P:DNA restriction-modification system"/>
    <property type="evidence" value="ECO:0007669"/>
    <property type="project" value="UniProtKB-KW"/>
</dbReference>
<proteinExistence type="predicted"/>
<name>YC2M_HERAU</name>
<organism>
    <name type="scientific">Herpetosiphon aurantiacus</name>
    <name type="common">Herpetosiphon giganteus</name>
    <dbReference type="NCBI Taxonomy" id="65"/>
    <lineage>
        <taxon>Bacteria</taxon>
        <taxon>Bacillati</taxon>
        <taxon>Chloroflexota</taxon>
        <taxon>Chloroflexia</taxon>
        <taxon>Herpetosiphonales</taxon>
        <taxon>Herpetosiphonaceae</taxon>
        <taxon>Herpetosiphon</taxon>
    </lineage>
</organism>
<accession>P25278</accession>
<reference key="1">
    <citation type="journal article" date="1992" name="Gene">
        <title>Stepwise cloning and genetic organization of the seemingly unclonable HgiCII restriction-modification system from Herpetosiphon giganteus strain Hpg9, using PCR technique.</title>
        <authorList>
            <person name="Erdmann D."/>
            <person name="Horst G."/>
            <person name="Duesterhoeft A."/>
            <person name="Kroeger M."/>
        </authorList>
    </citation>
    <scope>NUCLEOTIDE SEQUENCE [GENOMIC DNA]</scope>
    <source>
        <strain>HPG9</strain>
    </source>
</reference>
<reference key="2">
    <citation type="journal article" date="1995" name="Gene">
        <title>Organization and gene expression within restriction-modification systems of Herpetosiphon giganteus.</title>
        <authorList>
            <person name="Kroeger M."/>
            <person name="Blum E."/>
            <person name="Deppe E."/>
            <person name="Duesterhoeft A."/>
            <person name="Erdmann D."/>
            <person name="Kilz S."/>
            <person name="Meyer-Rogge S."/>
            <person name="Moestl D."/>
        </authorList>
    </citation>
    <scope>DISCUSSION OF SEQUENCE</scope>
</reference>
<comment type="function">
    <text>Could be a silencing control element for the regulation of the restriction system.</text>
</comment>
<feature type="chain" id="PRO_0000066165" description="Uncharacterized 10.2 kDa protein in HgiCIIM 5'region">
    <location>
        <begin position="1"/>
        <end position="94"/>
    </location>
</feature>